<comment type="function">
    <text evidence="2">Histone deacetylase that catalyzes the deacetylation of lysine residues on the N-terminal part of the core histones (H2A, H2B, H3 and H4). Histone deacetylation gives a tag for epigenetic repression and plays an important role in transcriptional regulation, cell cycle progression and developmental events. Histone deacetylases act via the formation of large multiprotein complexes. Also functions as deacetylase for non-histone proteins. In addition to protein deacetylase activity, also has protein-lysine deacylase activity: acts as a protein decrotonylase by mediating decrotonylation ((2E)-butenoyl) of histones.</text>
</comment>
<comment type="catalytic activity">
    <reaction evidence="1">
        <text>N(6)-acetyl-L-lysyl-[histone] + H2O = L-lysyl-[histone] + acetate</text>
        <dbReference type="Rhea" id="RHEA:58196"/>
        <dbReference type="Rhea" id="RHEA-COMP:9845"/>
        <dbReference type="Rhea" id="RHEA-COMP:11338"/>
        <dbReference type="ChEBI" id="CHEBI:15377"/>
        <dbReference type="ChEBI" id="CHEBI:29969"/>
        <dbReference type="ChEBI" id="CHEBI:30089"/>
        <dbReference type="ChEBI" id="CHEBI:61930"/>
        <dbReference type="EC" id="3.5.1.98"/>
    </reaction>
    <physiologicalReaction direction="left-to-right" evidence="1">
        <dbReference type="Rhea" id="RHEA:58197"/>
    </physiologicalReaction>
</comment>
<comment type="catalytic activity">
    <reaction evidence="2">
        <text>N(6)-acetyl-L-lysyl-[protein] + H2O = L-lysyl-[protein] + acetate</text>
        <dbReference type="Rhea" id="RHEA:58108"/>
        <dbReference type="Rhea" id="RHEA-COMP:9752"/>
        <dbReference type="Rhea" id="RHEA-COMP:10731"/>
        <dbReference type="ChEBI" id="CHEBI:15377"/>
        <dbReference type="ChEBI" id="CHEBI:29969"/>
        <dbReference type="ChEBI" id="CHEBI:30089"/>
        <dbReference type="ChEBI" id="CHEBI:61930"/>
    </reaction>
    <physiologicalReaction direction="left-to-right" evidence="2">
        <dbReference type="Rhea" id="RHEA:58109"/>
    </physiologicalReaction>
</comment>
<comment type="catalytic activity">
    <reaction evidence="2">
        <text>N(6)-(2E)-butenoyl-L-lysyl-[protein] + H2O = (2E)-2-butenoate + L-lysyl-[protein]</text>
        <dbReference type="Rhea" id="RHEA:69172"/>
        <dbReference type="Rhea" id="RHEA-COMP:9752"/>
        <dbReference type="Rhea" id="RHEA-COMP:13707"/>
        <dbReference type="ChEBI" id="CHEBI:15377"/>
        <dbReference type="ChEBI" id="CHEBI:29969"/>
        <dbReference type="ChEBI" id="CHEBI:35899"/>
        <dbReference type="ChEBI" id="CHEBI:137954"/>
    </reaction>
    <physiologicalReaction direction="left-to-right" evidence="2">
        <dbReference type="Rhea" id="RHEA:69173"/>
    </physiologicalReaction>
</comment>
<comment type="subunit">
    <text evidence="4">Part of a large multiprotein complex that also contains RBBP4.</text>
</comment>
<comment type="subcellular location">
    <subcellularLocation>
        <location evidence="1">Nucleus</location>
    </subcellularLocation>
    <subcellularLocation>
        <location evidence="1">Cytoplasm</location>
    </subcellularLocation>
</comment>
<comment type="tissue specificity">
    <text evidence="4">Oocyte.</text>
</comment>
<comment type="developmental stage">
    <text evidence="4 5">Expressed both maternally and zygotically. Accumulates in previtellogenic oocytes and is maintained at constant level throughout oogenesis and into early embryogenesis. Declines through gastrula to neurula. Not detectable between neurula and tailbud, nor in adult tissues other than ovary.</text>
</comment>
<comment type="similarity">
    <text evidence="7">Belongs to the histone deacetylase family. HD type 1 subfamily.</text>
</comment>
<accession>Q91695</accession>
<accession>Q66IY9</accession>
<reference key="1">
    <citation type="journal article" date="1997" name="Gene">
        <title>Xenopus HDm, a maternally expressed histone deacetylase, belongs to an ancient family of acetyl-metabolizing enzymes.</title>
        <authorList>
            <person name="Ladomery M.R."/>
            <person name="Lyons S."/>
            <person name="Sommerville J."/>
        </authorList>
    </citation>
    <scope>NUCLEOTIDE SEQUENCE [MRNA]</scope>
    <scope>DEVELOPMENTAL STAGE</scope>
    <source>
        <tissue>Oocyte</tissue>
    </source>
</reference>
<reference key="2">
    <citation type="submission" date="2004-08" db="EMBL/GenBank/DDBJ databases">
        <authorList>
            <consortium name="NIH - Xenopus Gene Collection (XGC) project"/>
        </authorList>
    </citation>
    <scope>NUCLEOTIDE SEQUENCE [LARGE SCALE MRNA]</scope>
    <source>
        <tissue>Oocyte</tissue>
    </source>
</reference>
<reference key="3">
    <citation type="journal article" date="1999" name="J. Cell Sci.">
        <title>Maternal histone deacetylase is accumulated in the nuclei of Xenopus oocytes as protein complexes with potential enzyme activity.</title>
        <authorList>
            <person name="Ryan J."/>
            <person name="Llinas A.J."/>
            <person name="White D.A."/>
            <person name="Turner B.M."/>
            <person name="Sommerville J."/>
        </authorList>
    </citation>
    <scope>TISSUE SPECIFICITY</scope>
    <scope>DEVELOPMENTAL STAGE</scope>
    <scope>INTERACTION WITH RBBP4</scope>
</reference>
<proteinExistence type="evidence at protein level"/>
<dbReference type="EC" id="3.5.1.98" evidence="1"/>
<dbReference type="EC" id="3.5.1.-" evidence="2"/>
<dbReference type="EMBL" id="X78454">
    <property type="protein sequence ID" value="CAA55211.1"/>
    <property type="molecule type" value="mRNA"/>
</dbReference>
<dbReference type="EMBL" id="BC081136">
    <property type="protein sequence ID" value="AAH81136.1"/>
    <property type="molecule type" value="mRNA"/>
</dbReference>
<dbReference type="PIR" id="S60381">
    <property type="entry name" value="S60381"/>
</dbReference>
<dbReference type="RefSeq" id="NP_001081491.1">
    <property type="nucleotide sequence ID" value="NM_001088022.1"/>
</dbReference>
<dbReference type="SMR" id="Q91695"/>
<dbReference type="BioGRID" id="99206">
    <property type="interactions" value="1"/>
</dbReference>
<dbReference type="GeneID" id="397868"/>
<dbReference type="KEGG" id="xla:397868"/>
<dbReference type="AGR" id="Xenbase:XB-GENE-6252325"/>
<dbReference type="CTD" id="397868"/>
<dbReference type="Xenbase" id="XB-GENE-6252325">
    <property type="gene designation" value="hdac1.L"/>
</dbReference>
<dbReference type="OMA" id="EFCKISC"/>
<dbReference type="OrthoDB" id="1918432at2759"/>
<dbReference type="Proteomes" id="UP000186698">
    <property type="component" value="Chromosome 2L"/>
</dbReference>
<dbReference type="Bgee" id="397868">
    <property type="expression patterns" value="Expressed in gastrula and 19 other cell types or tissues"/>
</dbReference>
<dbReference type="GO" id="GO:0005737">
    <property type="term" value="C:cytoplasm"/>
    <property type="evidence" value="ECO:0007669"/>
    <property type="project" value="UniProtKB-SubCell"/>
</dbReference>
<dbReference type="GO" id="GO:0016581">
    <property type="term" value="C:NuRD complex"/>
    <property type="evidence" value="ECO:0000318"/>
    <property type="project" value="GO_Central"/>
</dbReference>
<dbReference type="GO" id="GO:0004407">
    <property type="term" value="F:histone deacetylase activity"/>
    <property type="evidence" value="ECO:0000250"/>
    <property type="project" value="UniProtKB"/>
</dbReference>
<dbReference type="GO" id="GO:0141221">
    <property type="term" value="F:histone deacetylase activity, hydrolytic mechanism"/>
    <property type="evidence" value="ECO:0007669"/>
    <property type="project" value="UniProtKB-EC"/>
</dbReference>
<dbReference type="GO" id="GO:0160009">
    <property type="term" value="F:histone decrotonylase activity"/>
    <property type="evidence" value="ECO:0000250"/>
    <property type="project" value="UniProtKB"/>
</dbReference>
<dbReference type="GO" id="GO:0033558">
    <property type="term" value="F:protein lysine deacetylase activity"/>
    <property type="evidence" value="ECO:0000250"/>
    <property type="project" value="UniProtKB"/>
</dbReference>
<dbReference type="GO" id="GO:0031507">
    <property type="term" value="P:heterochromatin formation"/>
    <property type="evidence" value="ECO:0000318"/>
    <property type="project" value="GO_Central"/>
</dbReference>
<dbReference type="CDD" id="cd10010">
    <property type="entry name" value="HDAC1"/>
    <property type="match status" value="1"/>
</dbReference>
<dbReference type="FunFam" id="3.40.800.20:FF:000003">
    <property type="entry name" value="Histone deacetylase"/>
    <property type="match status" value="1"/>
</dbReference>
<dbReference type="Gene3D" id="3.40.800.20">
    <property type="entry name" value="Histone deacetylase domain"/>
    <property type="match status" value="1"/>
</dbReference>
<dbReference type="InterPro" id="IPR050284">
    <property type="entry name" value="HDAC_PDAC"/>
</dbReference>
<dbReference type="InterPro" id="IPR000286">
    <property type="entry name" value="His_deacetylse"/>
</dbReference>
<dbReference type="InterPro" id="IPR003084">
    <property type="entry name" value="His_deacetylse_1"/>
</dbReference>
<dbReference type="InterPro" id="IPR023801">
    <property type="entry name" value="His_deacetylse_dom"/>
</dbReference>
<dbReference type="InterPro" id="IPR037138">
    <property type="entry name" value="His_deacetylse_dom_sf"/>
</dbReference>
<dbReference type="InterPro" id="IPR023696">
    <property type="entry name" value="Ureohydrolase_dom_sf"/>
</dbReference>
<dbReference type="PANTHER" id="PTHR10625:SF49">
    <property type="entry name" value="HISTONE DEACETYLASE 1"/>
    <property type="match status" value="1"/>
</dbReference>
<dbReference type="PANTHER" id="PTHR10625">
    <property type="entry name" value="HISTONE DEACETYLASE HDAC1-RELATED"/>
    <property type="match status" value="1"/>
</dbReference>
<dbReference type="Pfam" id="PF00850">
    <property type="entry name" value="Hist_deacetyl"/>
    <property type="match status" value="1"/>
</dbReference>
<dbReference type="PIRSF" id="PIRSF037913">
    <property type="entry name" value="His_deacetylse_1"/>
    <property type="match status" value="1"/>
</dbReference>
<dbReference type="PRINTS" id="PR01270">
    <property type="entry name" value="HDASUPER"/>
</dbReference>
<dbReference type="PRINTS" id="PR01271">
    <property type="entry name" value="HISDACETLASE"/>
</dbReference>
<dbReference type="SUPFAM" id="SSF52768">
    <property type="entry name" value="Arginase/deacetylase"/>
    <property type="match status" value="1"/>
</dbReference>
<sequence length="480" mass="54748">MALTLGTKKKVCYYYDGDVGNYYYGQGHPMKPHRIRMTHNLLLNYGLYRKMEIFRPHKASAEDMTKYHSDDYIKFLRSIRPDNMSEYSKQMQRFNVGEDCPVFDGLFEFCQLSAGGSVASAVKLNKQQTDISVNWSGGLHHAKKSEASGFCYVNDIVLAILELLKYHQRVVYIDIDIHHGDGVEEAFYTTDRVMTVSFHKYGEYFPGTGDLRDIGAGKGKYYAVNYALRDGIDDESYEAIFKPVMSKVMEMFQPSAVVLQCGADSLSGDRLGCFNLTIKGHAKCVEFIKTFNLPLLMLGGGGYTIRNVARCWTYETAVALDSEIPNELPYNDYFEYFGPDFKLHISPSNMTNQNTNEYLEKIKQRLFENLRMLPHAPGVQMQAVAEDSIHDDSGEEDEDDPDKRISIRSSDKRIACDEEFSDSEDEGEGGRKNVANFKKVKRVKTEEEKEGEDKKDVKEEEKAKDEKTDSKRVKEETKSV</sequence>
<name>HDA1A_XENLA</name>
<evidence type="ECO:0000250" key="1">
    <source>
        <dbReference type="UniProtKB" id="O42227"/>
    </source>
</evidence>
<evidence type="ECO:0000250" key="2">
    <source>
        <dbReference type="UniProtKB" id="Q13547"/>
    </source>
</evidence>
<evidence type="ECO:0000256" key="3">
    <source>
        <dbReference type="SAM" id="MobiDB-lite"/>
    </source>
</evidence>
<evidence type="ECO:0000269" key="4">
    <source>
    </source>
</evidence>
<evidence type="ECO:0000269" key="5">
    <source>
    </source>
</evidence>
<evidence type="ECO:0000303" key="6">
    <source>
    </source>
</evidence>
<evidence type="ECO:0000305" key="7"/>
<feature type="chain" id="PRO_0000114691" description="Probable histone deacetylase 1-A">
    <location>
        <begin position="1"/>
        <end position="480"/>
    </location>
</feature>
<feature type="region of interest" description="Histone deacetylase">
    <location>
        <begin position="10"/>
        <end position="321"/>
    </location>
</feature>
<feature type="region of interest" description="Disordered" evidence="3">
    <location>
        <begin position="388"/>
        <end position="480"/>
    </location>
</feature>
<feature type="compositionally biased region" description="Basic and acidic residues" evidence="3">
    <location>
        <begin position="401"/>
        <end position="416"/>
    </location>
</feature>
<feature type="compositionally biased region" description="Acidic residues" evidence="3">
    <location>
        <begin position="417"/>
        <end position="427"/>
    </location>
</feature>
<feature type="compositionally biased region" description="Basic and acidic residues" evidence="3">
    <location>
        <begin position="443"/>
        <end position="480"/>
    </location>
</feature>
<feature type="active site" evidence="2">
    <location>
        <position position="141"/>
    </location>
</feature>
<protein>
    <recommendedName>
        <fullName>Probable histone deacetylase 1-A</fullName>
        <shortName>HD1-A</shortName>
        <ecNumber evidence="1">3.5.1.98</ecNumber>
    </recommendedName>
    <alternativeName>
        <fullName>AB21</fullName>
    </alternativeName>
    <alternativeName>
        <fullName evidence="6">HDM</fullName>
    </alternativeName>
    <alternativeName>
        <fullName>Maternally-expressed histone deacetylase</fullName>
    </alternativeName>
    <alternativeName>
        <fullName>Protein deacetylase HDAC1-A</fullName>
        <ecNumber evidence="2">3.5.1.-</ecNumber>
    </alternativeName>
    <alternativeName>
        <fullName>Protein decrotonylase HDAC1-A</fullName>
        <ecNumber evidence="2">3.5.1.-</ecNumber>
    </alternativeName>
</protein>
<gene>
    <name type="primary">hdac1-a</name>
</gene>
<organism>
    <name type="scientific">Xenopus laevis</name>
    <name type="common">African clawed frog</name>
    <dbReference type="NCBI Taxonomy" id="8355"/>
    <lineage>
        <taxon>Eukaryota</taxon>
        <taxon>Metazoa</taxon>
        <taxon>Chordata</taxon>
        <taxon>Craniata</taxon>
        <taxon>Vertebrata</taxon>
        <taxon>Euteleostomi</taxon>
        <taxon>Amphibia</taxon>
        <taxon>Batrachia</taxon>
        <taxon>Anura</taxon>
        <taxon>Pipoidea</taxon>
        <taxon>Pipidae</taxon>
        <taxon>Xenopodinae</taxon>
        <taxon>Xenopus</taxon>
        <taxon>Xenopus</taxon>
    </lineage>
</organism>
<keyword id="KW-0156">Chromatin regulator</keyword>
<keyword id="KW-0963">Cytoplasm</keyword>
<keyword id="KW-0217">Developmental protein</keyword>
<keyword id="KW-0378">Hydrolase</keyword>
<keyword id="KW-0539">Nucleus</keyword>
<keyword id="KW-1185">Reference proteome</keyword>
<keyword id="KW-0678">Repressor</keyword>
<keyword id="KW-0804">Transcription</keyword>
<keyword id="KW-0805">Transcription regulation</keyword>